<evidence type="ECO:0000255" key="1">
    <source>
        <dbReference type="HAMAP-Rule" id="MF_01668"/>
    </source>
</evidence>
<feature type="chain" id="PRO_0000352304" description="5-dehydro-2-deoxygluconokinase">
    <location>
        <begin position="1"/>
        <end position="325"/>
    </location>
</feature>
<comment type="function">
    <text evidence="1">Catalyzes the phosphorylation of 5-dehydro-2-deoxy-D-gluconate (2-deoxy-5-keto-D-gluconate or DKG) to 6-phospho-5-dehydro-2-deoxy-D-gluconate (DKGP).</text>
</comment>
<comment type="catalytic activity">
    <reaction evidence="1">
        <text>5-dehydro-2-deoxy-D-gluconate + ATP = 6-phospho-5-dehydro-2-deoxy-D-gluconate + ADP + H(+)</text>
        <dbReference type="Rhea" id="RHEA:13497"/>
        <dbReference type="ChEBI" id="CHEBI:15378"/>
        <dbReference type="ChEBI" id="CHEBI:16669"/>
        <dbReference type="ChEBI" id="CHEBI:30616"/>
        <dbReference type="ChEBI" id="CHEBI:57949"/>
        <dbReference type="ChEBI" id="CHEBI:456216"/>
        <dbReference type="EC" id="2.7.1.92"/>
    </reaction>
</comment>
<comment type="pathway">
    <text evidence="1">Polyol metabolism; myo-inositol degradation into acetyl-CoA; acetyl-CoA from myo-inositol: step 5/7.</text>
</comment>
<comment type="similarity">
    <text evidence="1">Belongs to the carbohydrate kinase PfkB family.</text>
</comment>
<keyword id="KW-0067">ATP-binding</keyword>
<keyword id="KW-0418">Kinase</keyword>
<keyword id="KW-0547">Nucleotide-binding</keyword>
<keyword id="KW-0808">Transferase</keyword>
<organism>
    <name type="scientific">Listeria monocytogenes serotype 4b (strain F2365)</name>
    <dbReference type="NCBI Taxonomy" id="265669"/>
    <lineage>
        <taxon>Bacteria</taxon>
        <taxon>Bacillati</taxon>
        <taxon>Bacillota</taxon>
        <taxon>Bacilli</taxon>
        <taxon>Bacillales</taxon>
        <taxon>Listeriaceae</taxon>
        <taxon>Listeria</taxon>
    </lineage>
</organism>
<protein>
    <recommendedName>
        <fullName evidence="1">5-dehydro-2-deoxygluconokinase</fullName>
        <ecNumber evidence="1">2.7.1.92</ecNumber>
    </recommendedName>
    <alternativeName>
        <fullName evidence="1">2-deoxy-5-keto-D-gluconate kinase</fullName>
        <shortName evidence="1">DKG kinase</shortName>
    </alternativeName>
</protein>
<dbReference type="EC" id="2.7.1.92" evidence="1"/>
<dbReference type="EMBL" id="AE017262">
    <property type="protein sequence ID" value="AAT03182.1"/>
    <property type="molecule type" value="Genomic_DNA"/>
</dbReference>
<dbReference type="RefSeq" id="WP_003734601.1">
    <property type="nucleotide sequence ID" value="NC_002973.6"/>
</dbReference>
<dbReference type="SMR" id="Q723S9"/>
<dbReference type="KEGG" id="lmf:LMOf2365_0397"/>
<dbReference type="HOGENOM" id="CLU_027634_6_0_9"/>
<dbReference type="UniPathway" id="UPA00076">
    <property type="reaction ID" value="UER00146"/>
</dbReference>
<dbReference type="GO" id="GO:0047590">
    <property type="term" value="F:5-dehydro-2-deoxygluconokinase activity"/>
    <property type="evidence" value="ECO:0007669"/>
    <property type="project" value="UniProtKB-UniRule"/>
</dbReference>
<dbReference type="GO" id="GO:0005524">
    <property type="term" value="F:ATP binding"/>
    <property type="evidence" value="ECO:0007669"/>
    <property type="project" value="UniProtKB-UniRule"/>
</dbReference>
<dbReference type="GO" id="GO:0019310">
    <property type="term" value="P:inositol catabolic process"/>
    <property type="evidence" value="ECO:0007669"/>
    <property type="project" value="UniProtKB-UniRule"/>
</dbReference>
<dbReference type="CDD" id="cd01166">
    <property type="entry name" value="KdgK"/>
    <property type="match status" value="1"/>
</dbReference>
<dbReference type="Gene3D" id="3.40.1190.20">
    <property type="match status" value="1"/>
</dbReference>
<dbReference type="Gene3D" id="2.20.150.10">
    <property type="entry name" value="putative 5-dehydro-2- deoxygluconokinase"/>
    <property type="match status" value="1"/>
</dbReference>
<dbReference type="HAMAP" id="MF_01668">
    <property type="entry name" value="IolC"/>
    <property type="match status" value="1"/>
</dbReference>
<dbReference type="InterPro" id="IPR002173">
    <property type="entry name" value="Carboh/pur_kinase_PfkB_CS"/>
</dbReference>
<dbReference type="InterPro" id="IPR022841">
    <property type="entry name" value="DKG_kinase_firmi"/>
</dbReference>
<dbReference type="InterPro" id="IPR030830">
    <property type="entry name" value="Myo_inos_IolC"/>
</dbReference>
<dbReference type="InterPro" id="IPR023314">
    <property type="entry name" value="Myo_inos_IolC-like_sf"/>
</dbReference>
<dbReference type="InterPro" id="IPR050306">
    <property type="entry name" value="PfkB_Carbo_kinase"/>
</dbReference>
<dbReference type="InterPro" id="IPR011611">
    <property type="entry name" value="PfkB_dom"/>
</dbReference>
<dbReference type="InterPro" id="IPR029056">
    <property type="entry name" value="Ribokinase-like"/>
</dbReference>
<dbReference type="NCBIfam" id="TIGR04382">
    <property type="entry name" value="myo_inos_iolC_N"/>
    <property type="match status" value="1"/>
</dbReference>
<dbReference type="PANTHER" id="PTHR43085:SF49">
    <property type="entry name" value="5-DEHYDRO-2-DEOXYGLUCONOKINASE"/>
    <property type="match status" value="1"/>
</dbReference>
<dbReference type="PANTHER" id="PTHR43085">
    <property type="entry name" value="HEXOKINASE FAMILY MEMBER"/>
    <property type="match status" value="1"/>
</dbReference>
<dbReference type="Pfam" id="PF00294">
    <property type="entry name" value="PfkB"/>
    <property type="match status" value="1"/>
</dbReference>
<dbReference type="SUPFAM" id="SSF53613">
    <property type="entry name" value="Ribokinase-like"/>
    <property type="match status" value="1"/>
</dbReference>
<dbReference type="PROSITE" id="PS00584">
    <property type="entry name" value="PFKB_KINASES_2"/>
    <property type="match status" value="1"/>
</dbReference>
<sequence length="325" mass="35643">MNLNKHSERKFDLITVGRACIDLNAVEYNRPMEETMTFSKYVGGSPANIAIGTAKLGLKVGFIGKISADQHGRFIEKYMRDLSINTDGMVKDTEGRKVGLAFTEIKSPDECSILMYRENVADLYLTPEEISEDYIKEARVLLISGTALAQSPSREAVLKAVSLARKNDVAVAFELDYRPYTWTNTEETAVYYSLVAEQADVIIGTRDEFDMMENQVGGKNEATKAHLFQHQAEIVVIKHGVEGSFAYTKAGETFQAKAYKTKVLKTFGAGDSYASAFLYGLFSGESIETALKYGSAAASIVVSKHSSSDAMPTADEIKALIAQAE</sequence>
<accession>Q723S9</accession>
<reference key="1">
    <citation type="journal article" date="2004" name="Nucleic Acids Res.">
        <title>Whole genome comparisons of serotype 4b and 1/2a strains of the food-borne pathogen Listeria monocytogenes reveal new insights into the core genome components of this species.</title>
        <authorList>
            <person name="Nelson K.E."/>
            <person name="Fouts D.E."/>
            <person name="Mongodin E.F."/>
            <person name="Ravel J."/>
            <person name="DeBoy R.T."/>
            <person name="Kolonay J.F."/>
            <person name="Rasko D.A."/>
            <person name="Angiuoli S.V."/>
            <person name="Gill S.R."/>
            <person name="Paulsen I.T."/>
            <person name="Peterson J.D."/>
            <person name="White O."/>
            <person name="Nelson W.C."/>
            <person name="Nierman W.C."/>
            <person name="Beanan M.J."/>
            <person name="Brinkac L.M."/>
            <person name="Daugherty S.C."/>
            <person name="Dodson R.J."/>
            <person name="Durkin A.S."/>
            <person name="Madupu R."/>
            <person name="Haft D.H."/>
            <person name="Selengut J."/>
            <person name="Van Aken S.E."/>
            <person name="Khouri H.M."/>
            <person name="Fedorova N."/>
            <person name="Forberger H.A."/>
            <person name="Tran B."/>
            <person name="Kathariou S."/>
            <person name="Wonderling L.D."/>
            <person name="Uhlich G.A."/>
            <person name="Bayles D.O."/>
            <person name="Luchansky J.B."/>
            <person name="Fraser C.M."/>
        </authorList>
    </citation>
    <scope>NUCLEOTIDE SEQUENCE [LARGE SCALE GENOMIC DNA]</scope>
    <source>
        <strain>F2365</strain>
    </source>
</reference>
<gene>
    <name evidence="1" type="primary">iolC</name>
    <name type="ordered locus">LMOf2365_0397</name>
</gene>
<proteinExistence type="inferred from homology"/>
<name>IOLC_LISMF</name>